<keyword id="KW-0963">Cytoplasm</keyword>
<keyword id="KW-0808">Transferase</keyword>
<keyword id="KW-0819">tRNA processing</keyword>
<accession>Q31YN2</accession>
<feature type="chain" id="PRO_0000234618" description="Sulfurtransferase TusE">
    <location>
        <begin position="1"/>
        <end position="109"/>
    </location>
</feature>
<feature type="active site" description="Cysteine persulfide intermediate" evidence="1">
    <location>
        <position position="108"/>
    </location>
</feature>
<comment type="function">
    <text evidence="1">Part of a sulfur-relay system required for 2-thiolation of 5-methylaminomethyl-2-thiouridine (mnm(5)s(2)U) at tRNA wobble positions. Could accept sulfur from TusD (By similarity).</text>
</comment>
<comment type="subunit">
    <text evidence="1">Interacts with the TusBCD complex. Interacts with MnmA (By similarity).</text>
</comment>
<comment type="subcellular location">
    <subcellularLocation>
        <location evidence="1">Cytoplasm</location>
    </subcellularLocation>
</comment>
<comment type="similarity">
    <text evidence="2">Belongs to the DsrC/TusE family.</text>
</comment>
<comment type="sequence caution" evidence="2">
    <conflict type="erroneous initiation">
        <sequence resource="EMBL-CDS" id="ABB66826"/>
    </conflict>
</comment>
<sequence length="109" mass="12410">MLIFEGKEIETDTEGYLKESSQWSEPLAVVIAENEGISLSPEHWEVVRFVRDFYLEFNTSPAIRMLVKAMANKFGEEKGNSRYLYRLFPKGPAKQATKIAGLPKPVKCI</sequence>
<evidence type="ECO:0000250" key="1"/>
<evidence type="ECO:0000305" key="2"/>
<protein>
    <recommendedName>
        <fullName>Sulfurtransferase TusE</fullName>
        <ecNumber>2.8.1.-</ecNumber>
    </recommendedName>
    <alternativeName>
        <fullName>tRNA 2-thiouridine synthesizing protein E</fullName>
    </alternativeName>
</protein>
<gene>
    <name type="primary">tusE</name>
    <name type="ordered locus">SBO_2262</name>
</gene>
<dbReference type="EC" id="2.8.1.-"/>
<dbReference type="EMBL" id="CP000036">
    <property type="protein sequence ID" value="ABB66826.1"/>
    <property type="status" value="ALT_INIT"/>
    <property type="molecule type" value="Genomic_DNA"/>
</dbReference>
<dbReference type="RefSeq" id="WP_000904442.1">
    <property type="nucleotide sequence ID" value="NC_007613.1"/>
</dbReference>
<dbReference type="SMR" id="Q31YN2"/>
<dbReference type="GeneID" id="93776445"/>
<dbReference type="KEGG" id="sbo:SBO_2262"/>
<dbReference type="HOGENOM" id="CLU_153199_0_0_6"/>
<dbReference type="Proteomes" id="UP000007067">
    <property type="component" value="Chromosome"/>
</dbReference>
<dbReference type="GO" id="GO:0005737">
    <property type="term" value="C:cytoplasm"/>
    <property type="evidence" value="ECO:0007669"/>
    <property type="project" value="UniProtKB-SubCell"/>
</dbReference>
<dbReference type="GO" id="GO:0097163">
    <property type="term" value="F:sulfur carrier activity"/>
    <property type="evidence" value="ECO:0007669"/>
    <property type="project" value="TreeGrafter"/>
</dbReference>
<dbReference type="GO" id="GO:0016740">
    <property type="term" value="F:transferase activity"/>
    <property type="evidence" value="ECO:0007669"/>
    <property type="project" value="UniProtKB-KW"/>
</dbReference>
<dbReference type="GO" id="GO:0002143">
    <property type="term" value="P:tRNA wobble position uridine thiolation"/>
    <property type="evidence" value="ECO:0007669"/>
    <property type="project" value="TreeGrafter"/>
</dbReference>
<dbReference type="FunFam" id="1.10.10.370:FF:000001">
    <property type="entry name" value="Sulfurtransferase"/>
    <property type="match status" value="1"/>
</dbReference>
<dbReference type="FunFam" id="3.30.1420.10:FF:000001">
    <property type="entry name" value="Sulfurtransferase"/>
    <property type="match status" value="1"/>
</dbReference>
<dbReference type="Gene3D" id="3.30.1420.10">
    <property type="match status" value="1"/>
</dbReference>
<dbReference type="Gene3D" id="1.10.10.370">
    <property type="entry name" value="DsrC-like protein, C-terminal domain"/>
    <property type="match status" value="1"/>
</dbReference>
<dbReference type="InterPro" id="IPR042072">
    <property type="entry name" value="DsrC-like_C"/>
</dbReference>
<dbReference type="InterPro" id="IPR025526">
    <property type="entry name" value="DsrC-like_dom_sf"/>
</dbReference>
<dbReference type="InterPro" id="IPR043163">
    <property type="entry name" value="DsrC-like_N"/>
</dbReference>
<dbReference type="InterPro" id="IPR007453">
    <property type="entry name" value="DsrC/TusE"/>
</dbReference>
<dbReference type="NCBIfam" id="TIGR03342">
    <property type="entry name" value="dsrC_tusE_dsvC"/>
    <property type="match status" value="1"/>
</dbReference>
<dbReference type="NCBIfam" id="NF008562">
    <property type="entry name" value="PRK11508.1"/>
    <property type="match status" value="1"/>
</dbReference>
<dbReference type="PANTHER" id="PTHR37010">
    <property type="entry name" value="SULFURTRANSFERASE TUSE"/>
    <property type="match status" value="1"/>
</dbReference>
<dbReference type="PANTHER" id="PTHR37010:SF1">
    <property type="entry name" value="SULFURTRANSFERASE TUSE"/>
    <property type="match status" value="1"/>
</dbReference>
<dbReference type="Pfam" id="PF04358">
    <property type="entry name" value="DsrC"/>
    <property type="match status" value="1"/>
</dbReference>
<dbReference type="PIRSF" id="PIRSF006223">
    <property type="entry name" value="DsrC_TusE"/>
    <property type="match status" value="1"/>
</dbReference>
<dbReference type="SUPFAM" id="SSF69721">
    <property type="entry name" value="DsrC, the gamma subunit of dissimilatory sulfite reductase"/>
    <property type="match status" value="1"/>
</dbReference>
<organism>
    <name type="scientific">Shigella boydii serotype 4 (strain Sb227)</name>
    <dbReference type="NCBI Taxonomy" id="300268"/>
    <lineage>
        <taxon>Bacteria</taxon>
        <taxon>Pseudomonadati</taxon>
        <taxon>Pseudomonadota</taxon>
        <taxon>Gammaproteobacteria</taxon>
        <taxon>Enterobacterales</taxon>
        <taxon>Enterobacteriaceae</taxon>
        <taxon>Shigella</taxon>
    </lineage>
</organism>
<proteinExistence type="inferred from homology"/>
<reference key="1">
    <citation type="journal article" date="2005" name="Nucleic Acids Res.">
        <title>Genome dynamics and diversity of Shigella species, the etiologic agents of bacillary dysentery.</title>
        <authorList>
            <person name="Yang F."/>
            <person name="Yang J."/>
            <person name="Zhang X."/>
            <person name="Chen L."/>
            <person name="Jiang Y."/>
            <person name="Yan Y."/>
            <person name="Tang X."/>
            <person name="Wang J."/>
            <person name="Xiong Z."/>
            <person name="Dong J."/>
            <person name="Xue Y."/>
            <person name="Zhu Y."/>
            <person name="Xu X."/>
            <person name="Sun L."/>
            <person name="Chen S."/>
            <person name="Nie H."/>
            <person name="Peng J."/>
            <person name="Xu J."/>
            <person name="Wang Y."/>
            <person name="Yuan Z."/>
            <person name="Wen Y."/>
            <person name="Yao Z."/>
            <person name="Shen Y."/>
            <person name="Qiang B."/>
            <person name="Hou Y."/>
            <person name="Yu J."/>
            <person name="Jin Q."/>
        </authorList>
    </citation>
    <scope>NUCLEOTIDE SEQUENCE [LARGE SCALE GENOMIC DNA]</scope>
    <source>
        <strain>Sb227</strain>
    </source>
</reference>
<name>TUSE_SHIBS</name>